<gene>
    <name type="ORF">GF15629</name>
</gene>
<feature type="chain" id="PRO_0000369270" description="Cytoplasmic tRNA 2-thiolation protein 2">
    <location>
        <begin position="1"/>
        <end position="403"/>
    </location>
</feature>
<accession>B3MN57</accession>
<organism>
    <name type="scientific">Drosophila ananassae</name>
    <name type="common">Fruit fly</name>
    <dbReference type="NCBI Taxonomy" id="7217"/>
    <lineage>
        <taxon>Eukaryota</taxon>
        <taxon>Metazoa</taxon>
        <taxon>Ecdysozoa</taxon>
        <taxon>Arthropoda</taxon>
        <taxon>Hexapoda</taxon>
        <taxon>Insecta</taxon>
        <taxon>Pterygota</taxon>
        <taxon>Neoptera</taxon>
        <taxon>Endopterygota</taxon>
        <taxon>Diptera</taxon>
        <taxon>Brachycera</taxon>
        <taxon>Muscomorpha</taxon>
        <taxon>Ephydroidea</taxon>
        <taxon>Drosophilidae</taxon>
        <taxon>Drosophila</taxon>
        <taxon>Sophophora</taxon>
    </lineage>
</organism>
<name>CTU2_DROAN</name>
<proteinExistence type="inferred from homology"/>
<comment type="function">
    <text evidence="1">Plays a central role in 2-thiolation of mcm(5)S(2)U at tRNA wobble positions of tRNA(Lys), tRNA(Glu) and tRNA(Gln). May act by forming a heterodimer with NCS6/CTU1 that ligates sulfur from thiocarboxylated URM1 onto the uridine of tRNAs at wobble position.</text>
</comment>
<comment type="pathway">
    <text evidence="1">tRNA modification; 5-methoxycarbonylmethyl-2-thiouridine-tRNA biosynthesis.</text>
</comment>
<comment type="subcellular location">
    <subcellularLocation>
        <location evidence="1">Cytoplasm</location>
    </subcellularLocation>
</comment>
<comment type="similarity">
    <text evidence="1">Belongs to the CTU2/NCS2 family.</text>
</comment>
<dbReference type="EMBL" id="CH902620">
    <property type="protein sequence ID" value="EDV32035.1"/>
    <property type="molecule type" value="Genomic_DNA"/>
</dbReference>
<dbReference type="SMR" id="B3MN57"/>
<dbReference type="FunCoup" id="B3MN57">
    <property type="interactions" value="1755"/>
</dbReference>
<dbReference type="STRING" id="7217.B3MN57"/>
<dbReference type="EnsemblMetazoa" id="FBtr0120329">
    <property type="protein sequence ID" value="FBpp0118821"/>
    <property type="gene ID" value="FBgn0092653"/>
</dbReference>
<dbReference type="EnsemblMetazoa" id="XM_001962778.4">
    <property type="protein sequence ID" value="XP_001962814.1"/>
    <property type="gene ID" value="LOC6498435"/>
</dbReference>
<dbReference type="GeneID" id="6498435"/>
<dbReference type="KEGG" id="dan:6498435"/>
<dbReference type="CTD" id="348180"/>
<dbReference type="eggNOG" id="KOG2594">
    <property type="taxonomic scope" value="Eukaryota"/>
</dbReference>
<dbReference type="HOGENOM" id="CLU_024534_2_1_1"/>
<dbReference type="InParanoid" id="B3MN57"/>
<dbReference type="OMA" id="CHACRNI"/>
<dbReference type="OrthoDB" id="25129at2759"/>
<dbReference type="PhylomeDB" id="B3MN57"/>
<dbReference type="UniPathway" id="UPA00988"/>
<dbReference type="Proteomes" id="UP000007801">
    <property type="component" value="Unassembled WGS sequence"/>
</dbReference>
<dbReference type="GO" id="GO:0005829">
    <property type="term" value="C:cytosol"/>
    <property type="evidence" value="ECO:0000250"/>
    <property type="project" value="UniProtKB"/>
</dbReference>
<dbReference type="GO" id="GO:0016779">
    <property type="term" value="F:nucleotidyltransferase activity"/>
    <property type="evidence" value="ECO:0007669"/>
    <property type="project" value="UniProtKB-UniRule"/>
</dbReference>
<dbReference type="GO" id="GO:0016783">
    <property type="term" value="F:sulfurtransferase activity"/>
    <property type="evidence" value="ECO:0007669"/>
    <property type="project" value="TreeGrafter"/>
</dbReference>
<dbReference type="GO" id="GO:0000049">
    <property type="term" value="F:tRNA binding"/>
    <property type="evidence" value="ECO:0007669"/>
    <property type="project" value="InterPro"/>
</dbReference>
<dbReference type="GO" id="GO:0032447">
    <property type="term" value="P:protein urmylation"/>
    <property type="evidence" value="ECO:0007669"/>
    <property type="project" value="UniProtKB-UniRule"/>
</dbReference>
<dbReference type="GO" id="GO:0034227">
    <property type="term" value="P:tRNA thio-modification"/>
    <property type="evidence" value="ECO:0000250"/>
    <property type="project" value="UniProtKB"/>
</dbReference>
<dbReference type="GO" id="GO:0002143">
    <property type="term" value="P:tRNA wobble position uridine thiolation"/>
    <property type="evidence" value="ECO:0007669"/>
    <property type="project" value="TreeGrafter"/>
</dbReference>
<dbReference type="GO" id="GO:0002098">
    <property type="term" value="P:tRNA wobble uridine modification"/>
    <property type="evidence" value="ECO:0000250"/>
    <property type="project" value="UniProtKB"/>
</dbReference>
<dbReference type="FunFam" id="3.40.50.620:FF:000229">
    <property type="entry name" value="Cytoplasmic tRNA 2-thiolation protein 2"/>
    <property type="match status" value="1"/>
</dbReference>
<dbReference type="Gene3D" id="3.40.50.620">
    <property type="entry name" value="HUPs"/>
    <property type="match status" value="1"/>
</dbReference>
<dbReference type="HAMAP" id="MF_03054">
    <property type="entry name" value="CTU2"/>
    <property type="match status" value="1"/>
</dbReference>
<dbReference type="InterPro" id="IPR019407">
    <property type="entry name" value="CTU2"/>
</dbReference>
<dbReference type="InterPro" id="IPR014729">
    <property type="entry name" value="Rossmann-like_a/b/a_fold"/>
</dbReference>
<dbReference type="PANTHER" id="PTHR20882">
    <property type="entry name" value="CYTOPLASMIC TRNA 2-THIOLATION PROTEIN 2"/>
    <property type="match status" value="1"/>
</dbReference>
<dbReference type="PANTHER" id="PTHR20882:SF14">
    <property type="entry name" value="CYTOPLASMIC TRNA 2-THIOLATION PROTEIN 2"/>
    <property type="match status" value="1"/>
</dbReference>
<dbReference type="Pfam" id="PF10288">
    <property type="entry name" value="CTU2"/>
    <property type="match status" value="1"/>
</dbReference>
<dbReference type="SUPFAM" id="SSF52402">
    <property type="entry name" value="Adenine nucleotide alpha hydrolases-like"/>
    <property type="match status" value="1"/>
</dbReference>
<keyword id="KW-0963">Cytoplasm</keyword>
<keyword id="KW-1185">Reference proteome</keyword>
<keyword id="KW-0819">tRNA processing</keyword>
<sequence length="403" mass="44278">MCSIGEDDFGDEGGTHAMVAGSVPSGIDLSPGECSKCDISSDELFQLNFRTPECRDCFLAYVRHKFRAALGAAKVLPRDAEVLLVVDGSAESLVLLDMLYYAQTQNTFKRLHCSARMVYLEDQPVQGRDPADLESLEALSKRYEAFEFYVITLGLPVGSLKLLKDYSPVAQESNELIQKLSQLRSLTSRQDYLQQQRKNLIASVAQKLHCSHVFNSSISVDLATQLLTSIALGRGGSAALDVALLDDRLAAGIKLLRPLKDLTEQEVQFYVHAQRLQPLLMASSRYGQELGDAASLQNLTSAFVANLQKNFSSTVSTVFRTGGKISESTHPEQAKCNHCQSALDVELSDTLLAIEYSRSVSEAGVRLNEAIEDPEIISKRRMKLNDELCHACSSIEADFKNGS</sequence>
<protein>
    <recommendedName>
        <fullName evidence="1">Cytoplasmic tRNA 2-thiolation protein 2</fullName>
    </recommendedName>
</protein>
<reference key="1">
    <citation type="journal article" date="2007" name="Nature">
        <title>Evolution of genes and genomes on the Drosophila phylogeny.</title>
        <authorList>
            <consortium name="Drosophila 12 genomes consortium"/>
        </authorList>
    </citation>
    <scope>NUCLEOTIDE SEQUENCE [LARGE SCALE GENOMIC DNA]</scope>
    <source>
        <strain>Tucson 14024-0371.13</strain>
    </source>
</reference>
<evidence type="ECO:0000255" key="1">
    <source>
        <dbReference type="HAMAP-Rule" id="MF_03054"/>
    </source>
</evidence>